<protein>
    <recommendedName>
        <fullName>Caspase-3</fullName>
        <shortName>CASP-3</shortName>
        <ecNumber>3.4.22.56</ecNumber>
    </recommendedName>
    <component>
        <recommendedName>
            <fullName>Caspase-3 subunit p17</fullName>
        </recommendedName>
    </component>
    <component>
        <recommendedName>
            <fullName>Caspase-3 subunit p12</fullName>
        </recommendedName>
    </component>
</protein>
<feature type="propeptide" id="PRO_0000261332" evidence="2">
    <location>
        <begin position="1"/>
        <end position="9"/>
    </location>
</feature>
<feature type="propeptide" id="PRO_0000261333" evidence="2">
    <location>
        <begin position="10"/>
        <end position="28"/>
    </location>
</feature>
<feature type="chain" id="PRO_0000261334" description="Caspase-3 subunit p17" evidence="2">
    <location>
        <begin position="29"/>
        <end position="175"/>
    </location>
</feature>
<feature type="chain" id="PRO_0000261335" description="Caspase-3 subunit p12" evidence="2">
    <location>
        <begin position="176"/>
        <end position="277"/>
    </location>
</feature>
<feature type="active site" evidence="1">
    <location>
        <position position="121"/>
    </location>
</feature>
<feature type="active site" evidence="1">
    <location>
        <position position="163"/>
    </location>
</feature>
<feature type="modified residue" description="N-acetylmethionine" evidence="2">
    <location>
        <position position="1"/>
    </location>
</feature>
<feature type="modified residue" description="N6-acetyllysine" evidence="3">
    <location>
        <position position="11"/>
    </location>
</feature>
<feature type="modified residue" description="Phosphoserine" evidence="2">
    <location>
        <position position="26"/>
    </location>
</feature>
<feature type="modified residue" description="S-nitrosocysteine; in inhibited form" evidence="2">
    <location>
        <position position="163"/>
    </location>
</feature>
<evidence type="ECO:0000250" key="1">
    <source>
        <dbReference type="UniProtKB" id="P29466"/>
    </source>
</evidence>
<evidence type="ECO:0000250" key="2">
    <source>
        <dbReference type="UniProtKB" id="P42574"/>
    </source>
</evidence>
<evidence type="ECO:0000250" key="3">
    <source>
        <dbReference type="UniProtKB" id="P70677"/>
    </source>
</evidence>
<evidence type="ECO:0000250" key="4">
    <source>
        <dbReference type="UniProtKB" id="Q60431"/>
    </source>
</evidence>
<evidence type="ECO:0000305" key="5"/>
<reference key="1">
    <citation type="submission" date="2005-07" db="EMBL/GenBank/DDBJ databases">
        <title>Analysis of gene expression in cynomolgus monkey tissues by macaque cDNA oligo-chips.</title>
        <authorList>
            <person name="Kobayashi M."/>
            <person name="Tanuma R."/>
            <person name="Hirata M."/>
            <person name="Osada N."/>
            <person name="Kusuda J."/>
            <person name="Sugano S."/>
            <person name="Hashimoto K."/>
        </authorList>
    </citation>
    <scope>NUCLEOTIDE SEQUENCE [LARGE SCALE MRNA]</scope>
    <source>
        <tissue>Medulla oblongata</tissue>
    </source>
</reference>
<sequence length="277" mass="31286">MENTENSVDSKSIKSLEPKIIHGSKSVDSGISLDNSYKMDYPEMGLCIIINNKNFHKSTGMASRSGTDVDAANLRETFINLKYGVRNKNDLTREEIVELMRNVSKEDHSKRSSFVCVLLSHGEEGIIFGTNGPLDLKKITSFFRGDCCRSLTGKPKLFIIQACRGTELDCGIEADSGVEDDMACHKIPVEADFLYAYSTAPGYYSWRNSKDGSWFIQSLCAMLKQYADKLEFMHILTRVNRKVATEFESFSLDATFHAKKQIPCIVSMLTKELYFYH</sequence>
<comment type="function">
    <text evidence="2 3 4">Involved in the activation cascade of caspases responsible for apoptosis execution. At the onset of apoptosis, it proteolytically cleaves poly(ADP-ribose) polymerase PARP1 at a '216-Asp-|-Gly-217' bond. Cleaves and activates sterol regulatory element binding proteins (SREBPs) between the basic helix-loop-helix leucine zipper domain and the membrane attachment domain. Cleaves and activates caspase-6, -7 and -9 (CASP6, CASP7 and CASP9, respectively). Cleaves and inactivates interleukin-18 (IL18) (By similarity). Triggers cell adhesion in sympathetic neurons through RET cleavage (By similarity). Cleaves IL-1 beta between an Asp and an Ala, releasing the mature cytokine which is involved in a variety of inflammatory processes (By similarity). Cleaves and inhibits serine/threonine-protein kinase AKT1 in response to oxidative stress. Acts as an inhibitor of type I interferon production during virus-induced apoptosis by mediating cleavage of antiviral proteins CGAS, IRF3 and MAVS, thereby preventing cytokine overproduction. Also involved in pyroptosis by mediating cleavage and activation of gasdermin-E (GSDME) (By similarity). Cleaves XRCC4 and phospholipid scramblase proteins XKR4, XKR8 and XKR9, leading to promote phosphatidylserine exposure on apoptotic cell surface (By similarity). Cleaves BIRC6 following inhibition of BIRC6-caspase binding by DIABLO/SMAC (By similarity).</text>
</comment>
<comment type="catalytic activity">
    <reaction evidence="2">
        <text>Strict requirement for an Asp residue at positions P1 and P4. It has a preferred cleavage sequence of Asp-Xaa-Xaa-Asp-|- with a hydrophobic amino-acid residue at P2 and a hydrophilic amino-acid residue at P3, although Val or Ala are also accepted at this position.</text>
        <dbReference type="EC" id="3.4.22.56"/>
    </reaction>
</comment>
<comment type="activity regulation">
    <text evidence="2">Inhibited by BIRC6; following inhibition of BIRC6-caspase binding by DIABLO/SMAC, BIRC6 is subjected to caspase cleavage, leading to an increase in active caspases.</text>
</comment>
<comment type="subunit">
    <text evidence="2">Heterotetramer that consists of two anti-parallel arranged heterodimers, each one formed by a 17 kDa (p17) and a 12 kDa (p12) subunit. Interacts with BIRC6/bruce.</text>
</comment>
<comment type="subcellular location">
    <subcellularLocation>
        <location evidence="2">Cytoplasm</location>
    </subcellularLocation>
</comment>
<comment type="PTM">
    <text evidence="2">Cleavage by granzyme B, caspase-6, caspase-8 and caspase-10 generates the two active subunits. Additional processing of the propeptides is likely due to the autocatalytic activity of the activated protease. Active heterodimers between the small subunit of caspase-7 protease and the large subunit of caspase-3 also occur and vice versa.</text>
</comment>
<comment type="PTM">
    <text evidence="2">S-nitrosylated on its catalytic site cysteine in unstimulated cell lines and denitrosylated upon activation of the Fas apoptotic pathway, associated with an increase in intracellular caspase activity. Fas therefore activates caspase-3 not only by inducing the cleavage of the caspase zymogen to its active subunits, but also by stimulating the denitrosylation of its active site thiol.</text>
</comment>
<comment type="PTM">
    <text evidence="2">Ubiquitinated by BIRC6; this activity is inhibited by DIABLO/SMAC.</text>
</comment>
<comment type="similarity">
    <text evidence="5">Belongs to the peptidase C14A family.</text>
</comment>
<dbReference type="EC" id="3.4.22.56"/>
<dbReference type="EMBL" id="AB220485">
    <property type="protein sequence ID" value="BAE73018.1"/>
    <property type="molecule type" value="mRNA"/>
</dbReference>
<dbReference type="RefSeq" id="NP_001271764.1">
    <property type="nucleotide sequence ID" value="NM_001284835.1"/>
</dbReference>
<dbReference type="SMR" id="Q2PFV2"/>
<dbReference type="STRING" id="9541.ENSMFAP00000031823"/>
<dbReference type="MEROPS" id="C14.003"/>
<dbReference type="eggNOG" id="KOG3573">
    <property type="taxonomic scope" value="Eukaryota"/>
</dbReference>
<dbReference type="Proteomes" id="UP000233100">
    <property type="component" value="Unplaced"/>
</dbReference>
<dbReference type="GO" id="GO:0005737">
    <property type="term" value="C:cytoplasm"/>
    <property type="evidence" value="ECO:0007669"/>
    <property type="project" value="UniProtKB-SubCell"/>
</dbReference>
<dbReference type="GO" id="GO:0031264">
    <property type="term" value="C:death-inducing signaling complex"/>
    <property type="evidence" value="ECO:0007669"/>
    <property type="project" value="TreeGrafter"/>
</dbReference>
<dbReference type="GO" id="GO:0004197">
    <property type="term" value="F:cysteine-type endopeptidase activity"/>
    <property type="evidence" value="ECO:0000250"/>
    <property type="project" value="UniProtKB"/>
</dbReference>
<dbReference type="GO" id="GO:0004175">
    <property type="term" value="F:endopeptidase activity"/>
    <property type="evidence" value="ECO:0000250"/>
    <property type="project" value="UniProtKB"/>
</dbReference>
<dbReference type="GO" id="GO:0006915">
    <property type="term" value="P:apoptotic process"/>
    <property type="evidence" value="ECO:0007669"/>
    <property type="project" value="UniProtKB-KW"/>
</dbReference>
<dbReference type="GO" id="GO:0030218">
    <property type="term" value="P:erythrocyte differentiation"/>
    <property type="evidence" value="ECO:0007669"/>
    <property type="project" value="TreeGrafter"/>
</dbReference>
<dbReference type="GO" id="GO:0030216">
    <property type="term" value="P:keratinocyte differentiation"/>
    <property type="evidence" value="ECO:0007669"/>
    <property type="project" value="TreeGrafter"/>
</dbReference>
<dbReference type="GO" id="GO:0030182">
    <property type="term" value="P:neuron differentiation"/>
    <property type="evidence" value="ECO:0007669"/>
    <property type="project" value="TreeGrafter"/>
</dbReference>
<dbReference type="GO" id="GO:1902004">
    <property type="term" value="P:positive regulation of amyloid-beta formation"/>
    <property type="evidence" value="ECO:0000250"/>
    <property type="project" value="UniProtKB"/>
</dbReference>
<dbReference type="GO" id="GO:0043525">
    <property type="term" value="P:positive regulation of neuron apoptotic process"/>
    <property type="evidence" value="ECO:0007669"/>
    <property type="project" value="TreeGrafter"/>
</dbReference>
<dbReference type="GO" id="GO:0051604">
    <property type="term" value="P:protein maturation"/>
    <property type="evidence" value="ECO:0007669"/>
    <property type="project" value="UniProtKB-ARBA"/>
</dbReference>
<dbReference type="GO" id="GO:0006508">
    <property type="term" value="P:proteolysis"/>
    <property type="evidence" value="ECO:0000250"/>
    <property type="project" value="UniProtKB"/>
</dbReference>
<dbReference type="GO" id="GO:0031647">
    <property type="term" value="P:regulation of protein stability"/>
    <property type="evidence" value="ECO:0000250"/>
    <property type="project" value="UniProtKB"/>
</dbReference>
<dbReference type="CDD" id="cd00032">
    <property type="entry name" value="CASc"/>
    <property type="match status" value="1"/>
</dbReference>
<dbReference type="FunFam" id="3.30.70.1470:FF:000002">
    <property type="entry name" value="Caspase-3"/>
    <property type="match status" value="1"/>
</dbReference>
<dbReference type="FunFam" id="3.40.50.1460:FF:000001">
    <property type="entry name" value="Caspase-3 preproprotein"/>
    <property type="match status" value="1"/>
</dbReference>
<dbReference type="Gene3D" id="3.40.50.1460">
    <property type="match status" value="1"/>
</dbReference>
<dbReference type="Gene3D" id="3.30.70.1470">
    <property type="entry name" value="Caspase-like"/>
    <property type="match status" value="1"/>
</dbReference>
<dbReference type="InterPro" id="IPR029030">
    <property type="entry name" value="Caspase-like_dom_sf"/>
</dbReference>
<dbReference type="InterPro" id="IPR033139">
    <property type="entry name" value="Caspase_cys_AS"/>
</dbReference>
<dbReference type="InterPro" id="IPR016129">
    <property type="entry name" value="Caspase_his_AS"/>
</dbReference>
<dbReference type="InterPro" id="IPR002398">
    <property type="entry name" value="Pept_C14"/>
</dbReference>
<dbReference type="InterPro" id="IPR011600">
    <property type="entry name" value="Pept_C14_caspase"/>
</dbReference>
<dbReference type="InterPro" id="IPR002138">
    <property type="entry name" value="Pept_C14_p10"/>
</dbReference>
<dbReference type="InterPro" id="IPR001309">
    <property type="entry name" value="Pept_C14_p20"/>
</dbReference>
<dbReference type="InterPro" id="IPR015917">
    <property type="entry name" value="Pept_C14A"/>
</dbReference>
<dbReference type="PANTHER" id="PTHR10454">
    <property type="entry name" value="CASPASE"/>
    <property type="match status" value="1"/>
</dbReference>
<dbReference type="PANTHER" id="PTHR10454:SF198">
    <property type="entry name" value="CASPASE-3"/>
    <property type="match status" value="1"/>
</dbReference>
<dbReference type="Pfam" id="PF00656">
    <property type="entry name" value="Peptidase_C14"/>
    <property type="match status" value="1"/>
</dbReference>
<dbReference type="PRINTS" id="PR00376">
    <property type="entry name" value="IL1BCENZYME"/>
</dbReference>
<dbReference type="SMART" id="SM00115">
    <property type="entry name" value="CASc"/>
    <property type="match status" value="1"/>
</dbReference>
<dbReference type="SUPFAM" id="SSF52129">
    <property type="entry name" value="Caspase-like"/>
    <property type="match status" value="1"/>
</dbReference>
<dbReference type="PROSITE" id="PS01122">
    <property type="entry name" value="CASPASE_CYS"/>
    <property type="match status" value="1"/>
</dbReference>
<dbReference type="PROSITE" id="PS01121">
    <property type="entry name" value="CASPASE_HIS"/>
    <property type="match status" value="1"/>
</dbReference>
<dbReference type="PROSITE" id="PS50207">
    <property type="entry name" value="CASPASE_P10"/>
    <property type="match status" value="1"/>
</dbReference>
<dbReference type="PROSITE" id="PS50208">
    <property type="entry name" value="CASPASE_P20"/>
    <property type="match status" value="1"/>
</dbReference>
<keyword id="KW-0007">Acetylation</keyword>
<keyword id="KW-0053">Apoptosis</keyword>
<keyword id="KW-0963">Cytoplasm</keyword>
<keyword id="KW-0378">Hydrolase</keyword>
<keyword id="KW-0597">Phosphoprotein</keyword>
<keyword id="KW-0645">Protease</keyword>
<keyword id="KW-1185">Reference proteome</keyword>
<keyword id="KW-0702">S-nitrosylation</keyword>
<keyword id="KW-0788">Thiol protease</keyword>
<keyword id="KW-0832">Ubl conjugation</keyword>
<keyword id="KW-0865">Zymogen</keyword>
<proteinExistence type="evidence at transcript level"/>
<name>CASP3_MACFA</name>
<accession>Q2PFV2</accession>
<organism>
    <name type="scientific">Macaca fascicularis</name>
    <name type="common">Crab-eating macaque</name>
    <name type="synonym">Cynomolgus monkey</name>
    <dbReference type="NCBI Taxonomy" id="9541"/>
    <lineage>
        <taxon>Eukaryota</taxon>
        <taxon>Metazoa</taxon>
        <taxon>Chordata</taxon>
        <taxon>Craniata</taxon>
        <taxon>Vertebrata</taxon>
        <taxon>Euteleostomi</taxon>
        <taxon>Mammalia</taxon>
        <taxon>Eutheria</taxon>
        <taxon>Euarchontoglires</taxon>
        <taxon>Primates</taxon>
        <taxon>Haplorrhini</taxon>
        <taxon>Catarrhini</taxon>
        <taxon>Cercopithecidae</taxon>
        <taxon>Cercopithecinae</taxon>
        <taxon>Macaca</taxon>
    </lineage>
</organism>
<gene>
    <name type="primary">CASP3</name>
    <name type="ORF">QmoA-14231</name>
</gene>